<reference key="1">
    <citation type="journal article" date="1996" name="Infect. Immun.">
        <title>Characterization of the Streptococcus pneumoniae immunoglobulin A1 protease gene (iga) and its translation product.</title>
        <authorList>
            <person name="Poulsen K."/>
            <person name="Reinholdt J."/>
            <person name="Kilian M."/>
        </authorList>
    </citation>
    <scope>NUCLEOTIDE SEQUENCE [GENOMIC DNA]</scope>
    <scope>FUNCTION</scope>
    <source>
        <strain>PK81 / Serotype 14</strain>
    </source>
</reference>
<comment type="function">
    <text evidence="7">Zinc metalloproteinase which cleaves human immunoglobulin A1 (IgA1) in the hinge region, rendering it less efficient in coating the surface of colonizing or invading pneumococci. May be responsible for pneumococcal infection and is potentially involved in distinct stages of pneumococcal disease.</text>
</comment>
<comment type="catalytic activity">
    <reaction>
        <text>Cleavage of Pro-|-Thr bond in the hinge region of the heavy chain of human IgA.</text>
        <dbReference type="EC" id="3.4.24.13"/>
    </reaction>
</comment>
<comment type="cofactor">
    <cofactor evidence="1">
        <name>Zn(2+)</name>
        <dbReference type="ChEBI" id="CHEBI:29105"/>
    </cofactor>
    <text evidence="1">Binds 1 zinc ion per subunit.</text>
</comment>
<comment type="subcellular location">
    <subcellularLocation>
        <location evidence="4">Secreted</location>
        <location evidence="4">Cell wall</location>
    </subcellularLocation>
    <subcellularLocation>
        <location evidence="1">Membrane</location>
        <topology evidence="1">Multi-pass membrane protein</topology>
    </subcellularLocation>
    <subcellularLocation>
        <location evidence="4">Secreted</location>
        <location evidence="4">Cell wall</location>
        <topology evidence="4">Peptidoglycan-anchor</topology>
    </subcellularLocation>
</comment>
<comment type="PTM">
    <text evidence="1">The Gram-positive cell-wall anchor motif LPXTG is located in the N-terminal part, in contrast to such motifs in other known streptococcal and staphylococcal proteins. The protease could be cleaved by the sortase and anchored in the membrane via the two potential N-terminal transmembrane domains, whereas the propeptide located prior to the LPXTG motif would remain attached to the cell wall peptidoglycan by an amide bond (By similarity).</text>
</comment>
<comment type="similarity">
    <text evidence="8">Belongs to the peptidase M26 family.</text>
</comment>
<feature type="signal peptide" evidence="2">
    <location>
        <begin position="1"/>
        <end position="42"/>
    </location>
</feature>
<feature type="propeptide" id="PRO_0000026835" evidence="2">
    <location>
        <begin position="43"/>
        <end position="99"/>
    </location>
</feature>
<feature type="chain" id="PRO_0000026836" description="Immunoglobulin A1 protease">
    <location>
        <begin position="100"/>
        <end position="1927"/>
    </location>
</feature>
<feature type="transmembrane region" description="Helical" evidence="2">
    <location>
        <begin position="106"/>
        <end position="125"/>
    </location>
</feature>
<feature type="transmembrane region" description="Helical" evidence="2">
    <location>
        <begin position="132"/>
        <end position="154"/>
    </location>
</feature>
<feature type="topological domain" description="Extracellular" evidence="2">
    <location>
        <begin position="155"/>
        <end position="1927"/>
    </location>
</feature>
<feature type="domain" description="G5" evidence="3">
    <location>
        <begin position="314"/>
        <end position="393"/>
    </location>
</feature>
<feature type="repeat" description="1">
    <location>
        <begin position="419"/>
        <end position="435"/>
    </location>
</feature>
<feature type="repeat" description="2">
    <location>
        <begin position="436"/>
        <end position="452"/>
    </location>
</feature>
<feature type="repeat" description="3">
    <location>
        <begin position="453"/>
        <end position="469"/>
    </location>
</feature>
<feature type="region of interest" description="Disordered" evidence="6">
    <location>
        <begin position="235"/>
        <end position="305"/>
    </location>
</feature>
<feature type="region of interest" description="Disordered" evidence="6">
    <location>
        <begin position="371"/>
        <end position="394"/>
    </location>
</feature>
<feature type="region of interest" description="3 X 17 AA approximate tandem repeats">
    <location>
        <begin position="419"/>
        <end position="469"/>
    </location>
</feature>
<feature type="region of interest" description="Disordered" evidence="6">
    <location>
        <begin position="426"/>
        <end position="640"/>
    </location>
</feature>
<feature type="short sequence motif" description="LPXTG sorting signal" evidence="4">
    <location>
        <begin position="96"/>
        <end position="100"/>
    </location>
</feature>
<feature type="compositionally biased region" description="Polar residues" evidence="6">
    <location>
        <begin position="235"/>
        <end position="246"/>
    </location>
</feature>
<feature type="compositionally biased region" description="Basic and acidic residues" evidence="6">
    <location>
        <begin position="276"/>
        <end position="296"/>
    </location>
</feature>
<feature type="compositionally biased region" description="Basic and acidic residues" evidence="6">
    <location>
        <begin position="485"/>
        <end position="511"/>
    </location>
</feature>
<feature type="compositionally biased region" description="Polar residues" evidence="6">
    <location>
        <begin position="516"/>
        <end position="529"/>
    </location>
</feature>
<feature type="compositionally biased region" description="Polar residues" evidence="6">
    <location>
        <begin position="538"/>
        <end position="559"/>
    </location>
</feature>
<feature type="compositionally biased region" description="Polar residues" evidence="6">
    <location>
        <begin position="568"/>
        <end position="606"/>
    </location>
</feature>
<feature type="compositionally biased region" description="Low complexity" evidence="6">
    <location>
        <begin position="609"/>
        <end position="619"/>
    </location>
</feature>
<feature type="compositionally biased region" description="Basic and acidic residues" evidence="6">
    <location>
        <begin position="620"/>
        <end position="640"/>
    </location>
</feature>
<feature type="active site" evidence="5">
    <location>
        <position position="1566"/>
    </location>
</feature>
<feature type="binding site" evidence="1">
    <location>
        <position position="1565"/>
    </location>
    <ligand>
        <name>Zn(2+)</name>
        <dbReference type="ChEBI" id="CHEBI:29105"/>
    </ligand>
</feature>
<feature type="binding site" evidence="1">
    <location>
        <position position="1569"/>
    </location>
    <ligand>
        <name>Zn(2+)</name>
        <dbReference type="ChEBI" id="CHEBI:29105"/>
    </ligand>
</feature>
<feature type="binding site" evidence="1">
    <location>
        <position position="1589"/>
    </location>
    <ligand>
        <name>Zn(2+)</name>
        <dbReference type="ChEBI" id="CHEBI:29105"/>
    </ligand>
</feature>
<feature type="modified residue" description="Pentaglycyl murein peptidoglycan amidated threonine" evidence="4">
    <location>
        <position position="99"/>
    </location>
</feature>
<feature type="strand" evidence="9">
    <location>
        <begin position="317"/>
        <end position="328"/>
    </location>
</feature>
<feature type="strand" evidence="9">
    <location>
        <begin position="332"/>
        <end position="337"/>
    </location>
</feature>
<feature type="strand" evidence="9">
    <location>
        <begin position="345"/>
        <end position="349"/>
    </location>
</feature>
<feature type="strand" evidence="9">
    <location>
        <begin position="354"/>
        <end position="367"/>
    </location>
</feature>
<feature type="strand" evidence="9">
    <location>
        <begin position="369"/>
        <end position="380"/>
    </location>
</feature>
<feature type="strand" evidence="9">
    <location>
        <begin position="385"/>
        <end position="390"/>
    </location>
</feature>
<proteinExistence type="evidence at protein level"/>
<protein>
    <recommendedName>
        <fullName>Immunoglobulin A1 protease</fullName>
        <shortName>IgA1 protease</shortName>
        <ecNumber>3.4.24.13</ecNumber>
    </recommendedName>
    <alternativeName>
        <fullName>IgA-specific zinc metalloproteinase</fullName>
    </alternativeName>
</protein>
<accession>Q54875</accession>
<dbReference type="EC" id="3.4.24.13"/>
<dbReference type="EMBL" id="X94909">
    <property type="protein sequence ID" value="CAA64396.1"/>
    <property type="molecule type" value="Genomic_DNA"/>
</dbReference>
<dbReference type="PDB" id="6OH1">
    <property type="method" value="NMR"/>
    <property type="chains" value="A=313-393"/>
</dbReference>
<dbReference type="PDBsum" id="6OH1"/>
<dbReference type="BMRB" id="Q54875"/>
<dbReference type="SMR" id="Q54875"/>
<dbReference type="MEROPS" id="M26.001"/>
<dbReference type="BRENDA" id="3.4.24.13">
    <property type="organism ID" value="1960"/>
</dbReference>
<dbReference type="GO" id="GO:0005576">
    <property type="term" value="C:extracellular region"/>
    <property type="evidence" value="ECO:0007669"/>
    <property type="project" value="UniProtKB-KW"/>
</dbReference>
<dbReference type="GO" id="GO:0016020">
    <property type="term" value="C:membrane"/>
    <property type="evidence" value="ECO:0007669"/>
    <property type="project" value="UniProtKB-SubCell"/>
</dbReference>
<dbReference type="GO" id="GO:0004222">
    <property type="term" value="F:metalloendopeptidase activity"/>
    <property type="evidence" value="ECO:0007669"/>
    <property type="project" value="InterPro"/>
</dbReference>
<dbReference type="GO" id="GO:0008270">
    <property type="term" value="F:zinc ion binding"/>
    <property type="evidence" value="ECO:0007669"/>
    <property type="project" value="InterPro"/>
</dbReference>
<dbReference type="GO" id="GO:0006508">
    <property type="term" value="P:proteolysis"/>
    <property type="evidence" value="ECO:0007669"/>
    <property type="project" value="UniProtKB-KW"/>
</dbReference>
<dbReference type="Gene3D" id="2.160.20.110">
    <property type="match status" value="1"/>
</dbReference>
<dbReference type="Gene3D" id="2.20.230.10">
    <property type="entry name" value="Resuscitation-promoting factor rpfb"/>
    <property type="match status" value="1"/>
</dbReference>
<dbReference type="InterPro" id="IPR011098">
    <property type="entry name" value="G5_dom"/>
</dbReference>
<dbReference type="InterPro" id="IPR011493">
    <property type="entry name" value="GLUG"/>
</dbReference>
<dbReference type="InterPro" id="IPR019931">
    <property type="entry name" value="LPXTG_anchor"/>
</dbReference>
<dbReference type="InterPro" id="IPR011505">
    <property type="entry name" value="Peptidase_M26_C_dom"/>
</dbReference>
<dbReference type="InterPro" id="IPR008006">
    <property type="entry name" value="Peptidase_M26_N_dom"/>
</dbReference>
<dbReference type="InterPro" id="IPR005877">
    <property type="entry name" value="YSIRK_signal_dom"/>
</dbReference>
<dbReference type="NCBIfam" id="TIGR01167">
    <property type="entry name" value="LPXTG_anchor"/>
    <property type="match status" value="1"/>
</dbReference>
<dbReference type="NCBIfam" id="TIGR01168">
    <property type="entry name" value="YSIRK_signal"/>
    <property type="match status" value="1"/>
</dbReference>
<dbReference type="PANTHER" id="PTHR22929">
    <property type="entry name" value="RNA POLYMERASE III TRANSCRIPTION INITIATION FACTOR B"/>
    <property type="match status" value="1"/>
</dbReference>
<dbReference type="PANTHER" id="PTHR22929:SF0">
    <property type="entry name" value="TRANSCRIPTION FACTOR TFIIIB COMPONENT B'' HOMOLOG"/>
    <property type="match status" value="1"/>
</dbReference>
<dbReference type="Pfam" id="PF07501">
    <property type="entry name" value="G5"/>
    <property type="match status" value="1"/>
</dbReference>
<dbReference type="Pfam" id="PF07581">
    <property type="entry name" value="Glug"/>
    <property type="match status" value="1"/>
</dbReference>
<dbReference type="Pfam" id="PF00746">
    <property type="entry name" value="Gram_pos_anchor"/>
    <property type="match status" value="1"/>
</dbReference>
<dbReference type="Pfam" id="PF07580">
    <property type="entry name" value="Peptidase_M26_C"/>
    <property type="match status" value="1"/>
</dbReference>
<dbReference type="Pfam" id="PF05342">
    <property type="entry name" value="Peptidase_M26_N"/>
    <property type="match status" value="1"/>
</dbReference>
<dbReference type="Pfam" id="PF04650">
    <property type="entry name" value="YSIRK_signal"/>
    <property type="match status" value="1"/>
</dbReference>
<dbReference type="SMART" id="SM01208">
    <property type="entry name" value="G5"/>
    <property type="match status" value="1"/>
</dbReference>
<dbReference type="PROSITE" id="PS51109">
    <property type="entry name" value="G5"/>
    <property type="match status" value="1"/>
</dbReference>
<dbReference type="PROSITE" id="PS50847">
    <property type="entry name" value="GRAM_POS_ANCHORING"/>
    <property type="match status" value="1"/>
</dbReference>
<dbReference type="PROSITE" id="PS00142">
    <property type="entry name" value="ZINC_PROTEASE"/>
    <property type="match status" value="1"/>
</dbReference>
<sequence>MEKYFGEKQERFSFRKLSVGLVSATISSLFFMSVLASSSVDAQETAGVHYKYVADSELSSEEKKQLVYDIPTYVENDDETYYLVYKLNSQNQLAELPNTGSKNERQALVAGASLAALGILIFAVSKKKVKNKTVLHLVLVAGIGNGVLVSVHALENHLLLNYNTDYELTSGEKLPLPKEISGYTYIGYIKEGKTTSDFEVSNQEKSAATPTKQQKVDYNVTPNFVDHPSTVQAIQEQTPVSSTKPTEVQVVEKPFSTELINPRKEEKQSSDSQEQLAEHKNLETKKEEKISPKEKTGVNTLNPQDEVLSGQLNKPELLYREETIETKIDFQEEIQENPDLAEGTVRVKQEGKLGKKVEIVRIFSVNKEEVSREIVSTSTTAPSPRIVEKGTKKTQVIKEQPETGVEHKDVQSGAIVEPAIQPELPEAVVSDKGEPEVQPTLPEAVVTDKGEPAVQPELPEAVVSDKGEPEQVAPLPEYKGNIEQVKPETPVEKTKEQGPEKTEEVPVKPTEETPVNPNEGTTEGTSIQGAENPVQPAEDTQTNSGKIANENTGEVSNKPSDSKPPVEESNQPEKNGTATKPENSGNTTSENGQTEPEPSNGNSTEDVSTKSNTSNSNGNEEIKQENELDPDKKVEDPEKTLELRNVSDLELYSLSNGTYKQHISLEQVPSNPNSYFVKVKSSSFKDVYLPVASISEGRKNDKILYKITAKVEKLQQEIESRYKDNFTFYLAKKGTEETTNFTSFSNLVKAINQNLSGTYHLGASLNANEVELSTDDKSYIKGTFTGQLIGEKDGKHYAIYNLKKPLFENLSGATVEKLSLKNVAISGKNDIGSLANEATNGTKIKQVHVDGVLAGERGVGGLLAKADQSSIAESSFKGRIVNTYETTDSYNIGGLVGHLTGKNASIAKSKATVTISSNTNRSDQTVGGLAGLVDRDAQIQDSYAEGDINNVKHFGRVAGVAGNLWDRTSGDVRHAGSLTNVLSDVNVTNGNAITGYHYTGMKVANTFSSKANRVFNVTLEKNEVVSKESFEERGTMLDASQIASKKAEINLITPPIVEPLSTSGKKDSDFSKIAHYQANRALVYKNIEKLLPFYNKATIVKYGNLVKENSILYQKELLSAVMMKDDQVITDIISNKQTANKLLLHYKDHSSEKFDLRYQADFANLAEYSIGDSGLLYTPNQFLYHQDSIINQVLPELNRVNYQSDAVRNTLGISPEVKLTELYLEEQFTKTKEHLAENLKKLLSSDAGLVTDNEVMTGYIIDKIKRNKEALLLGMSYLERWYNFSYGQVNVKDLVMYHPDFFGKGNTSPLDTLIELGKSGFNNLLAKNNVDTYAISLASHHGTTDLFSTLENYRKVFLPDKTNNDWFKSQTKAYIVEEKSNIEEVKTKQGLVGTKYSIGVYDRITSATWKYRNMVLPLLTLPERSVFVISTISSLGFGAYDRYRNKEHQANGDLNSFVEKSAHETAERQRDHYDYWYRILDEKGREKLYRNILLYDAYKFGTNHTEGKATEVADFDSPNPAMKHFFGPVGNKVGHNGHGAYATGDAVYYMGYRMLDKDGAITYTHEMTHNSDQDIYLGGYGRRSGLGPEFFAKGLLQAPDQPSDATITINSILKHSKSDSKEGERLQVLDPTTRFKDATDLQKYVHNMFDVVYMLEYLEGKSIVKKLNVYQKIEALRKIENQYLTDPADGNDVYATNVVKNLTEDEAKKLTSFDSLIDNNILSAREYKAGTYERNGYFTIKLFAPIFSALSGEKGTPGDLMGRRIAFELLAAKGFKDGMVPYISNQYEEDAKQQGQTINLYGKERGLVTDELVLKKVFDGKYKTWAEFKTAMYQERVDQFGNLKQVTFKDPTKPWPRYGTKTINNVDELQKLMDEAVLQDAKERNYYYWNNYNPETDSAVHKLKRAIFKAYLDQTNDFRRSIFENKK</sequence>
<keyword id="KW-0002">3D-structure</keyword>
<keyword id="KW-0134">Cell wall</keyword>
<keyword id="KW-0378">Hydrolase</keyword>
<keyword id="KW-0472">Membrane</keyword>
<keyword id="KW-0479">Metal-binding</keyword>
<keyword id="KW-0482">Metalloprotease</keyword>
<keyword id="KW-0572">Peptidoglycan-anchor</keyword>
<keyword id="KW-0645">Protease</keyword>
<keyword id="KW-0677">Repeat</keyword>
<keyword id="KW-0964">Secreted</keyword>
<keyword id="KW-0732">Signal</keyword>
<keyword id="KW-0812">Transmembrane</keyword>
<keyword id="KW-1133">Transmembrane helix</keyword>
<keyword id="KW-0843">Virulence</keyword>
<keyword id="KW-0862">Zinc</keyword>
<name>IGA1B_STREE</name>
<organism>
    <name type="scientific">Streptococcus pneumoniae</name>
    <dbReference type="NCBI Taxonomy" id="1313"/>
    <lineage>
        <taxon>Bacteria</taxon>
        <taxon>Bacillati</taxon>
        <taxon>Bacillota</taxon>
        <taxon>Bacilli</taxon>
        <taxon>Lactobacillales</taxon>
        <taxon>Streptococcaceae</taxon>
        <taxon>Streptococcus</taxon>
    </lineage>
</organism>
<gene>
    <name type="primary">iga</name>
</gene>
<evidence type="ECO:0000250" key="1"/>
<evidence type="ECO:0000255" key="2"/>
<evidence type="ECO:0000255" key="3">
    <source>
        <dbReference type="PROSITE-ProRule" id="PRU00437"/>
    </source>
</evidence>
<evidence type="ECO:0000255" key="4">
    <source>
        <dbReference type="PROSITE-ProRule" id="PRU00477"/>
    </source>
</evidence>
<evidence type="ECO:0000255" key="5">
    <source>
        <dbReference type="PROSITE-ProRule" id="PRU10095"/>
    </source>
</evidence>
<evidence type="ECO:0000256" key="6">
    <source>
        <dbReference type="SAM" id="MobiDB-lite"/>
    </source>
</evidence>
<evidence type="ECO:0000269" key="7">
    <source>
    </source>
</evidence>
<evidence type="ECO:0000305" key="8"/>
<evidence type="ECO:0007829" key="9">
    <source>
        <dbReference type="PDB" id="6OH1"/>
    </source>
</evidence>